<protein>
    <recommendedName>
        <fullName evidence="1">Glutamate-1-semialdehyde 2,1-aminomutase</fullName>
        <shortName evidence="1">GSA</shortName>
        <ecNumber evidence="1">5.4.3.8</ecNumber>
    </recommendedName>
    <alternativeName>
        <fullName evidence="1">Glutamate-1-semialdehyde aminotransferase</fullName>
        <shortName evidence="1">GSA-AT</shortName>
    </alternativeName>
</protein>
<evidence type="ECO:0000255" key="1">
    <source>
        <dbReference type="HAMAP-Rule" id="MF_00375"/>
    </source>
</evidence>
<organism>
    <name type="scientific">Chromobacterium violaceum (strain ATCC 12472 / DSM 30191 / JCM 1249 / CCUG 213 / NBRC 12614 / NCIMB 9131 / NCTC 9757 / MK)</name>
    <dbReference type="NCBI Taxonomy" id="243365"/>
    <lineage>
        <taxon>Bacteria</taxon>
        <taxon>Pseudomonadati</taxon>
        <taxon>Pseudomonadota</taxon>
        <taxon>Betaproteobacteria</taxon>
        <taxon>Neisseriales</taxon>
        <taxon>Chromobacteriaceae</taxon>
        <taxon>Chromobacterium</taxon>
    </lineage>
</organism>
<dbReference type="EC" id="5.4.3.8" evidence="1"/>
<dbReference type="EMBL" id="AE016825">
    <property type="protein sequence ID" value="AAQ57746.2"/>
    <property type="molecule type" value="Genomic_DNA"/>
</dbReference>
<dbReference type="RefSeq" id="WP_011133622.1">
    <property type="nucleotide sequence ID" value="NC_005085.1"/>
</dbReference>
<dbReference type="SMR" id="Q7P1Z5"/>
<dbReference type="STRING" id="243365.CV_0067"/>
<dbReference type="KEGG" id="cvi:CV_0067"/>
<dbReference type="eggNOG" id="COG0001">
    <property type="taxonomic scope" value="Bacteria"/>
</dbReference>
<dbReference type="HOGENOM" id="CLU_016922_1_5_4"/>
<dbReference type="OrthoDB" id="3398487at2"/>
<dbReference type="UniPathway" id="UPA00251">
    <property type="reaction ID" value="UER00317"/>
</dbReference>
<dbReference type="Proteomes" id="UP000001424">
    <property type="component" value="Chromosome"/>
</dbReference>
<dbReference type="GO" id="GO:0005737">
    <property type="term" value="C:cytoplasm"/>
    <property type="evidence" value="ECO:0007669"/>
    <property type="project" value="UniProtKB-SubCell"/>
</dbReference>
<dbReference type="GO" id="GO:0042286">
    <property type="term" value="F:glutamate-1-semialdehyde 2,1-aminomutase activity"/>
    <property type="evidence" value="ECO:0007669"/>
    <property type="project" value="UniProtKB-UniRule"/>
</dbReference>
<dbReference type="GO" id="GO:0030170">
    <property type="term" value="F:pyridoxal phosphate binding"/>
    <property type="evidence" value="ECO:0007669"/>
    <property type="project" value="InterPro"/>
</dbReference>
<dbReference type="GO" id="GO:0008483">
    <property type="term" value="F:transaminase activity"/>
    <property type="evidence" value="ECO:0007669"/>
    <property type="project" value="InterPro"/>
</dbReference>
<dbReference type="GO" id="GO:0006782">
    <property type="term" value="P:protoporphyrinogen IX biosynthetic process"/>
    <property type="evidence" value="ECO:0007669"/>
    <property type="project" value="UniProtKB-UniRule"/>
</dbReference>
<dbReference type="CDD" id="cd00610">
    <property type="entry name" value="OAT_like"/>
    <property type="match status" value="1"/>
</dbReference>
<dbReference type="FunFam" id="3.40.640.10:FF:000021">
    <property type="entry name" value="Glutamate-1-semialdehyde 2,1-aminomutase"/>
    <property type="match status" value="1"/>
</dbReference>
<dbReference type="Gene3D" id="3.90.1150.10">
    <property type="entry name" value="Aspartate Aminotransferase, domain 1"/>
    <property type="match status" value="1"/>
</dbReference>
<dbReference type="Gene3D" id="3.40.640.10">
    <property type="entry name" value="Type I PLP-dependent aspartate aminotransferase-like (Major domain)"/>
    <property type="match status" value="1"/>
</dbReference>
<dbReference type="HAMAP" id="MF_00375">
    <property type="entry name" value="HemL_aminotrans_3"/>
    <property type="match status" value="1"/>
</dbReference>
<dbReference type="InterPro" id="IPR004639">
    <property type="entry name" value="4pyrrol_synth_GluAld_NH2Trfase"/>
</dbReference>
<dbReference type="InterPro" id="IPR005814">
    <property type="entry name" value="Aminotrans_3"/>
</dbReference>
<dbReference type="InterPro" id="IPR049704">
    <property type="entry name" value="Aminotrans_3_PPA_site"/>
</dbReference>
<dbReference type="InterPro" id="IPR015424">
    <property type="entry name" value="PyrdxlP-dep_Trfase"/>
</dbReference>
<dbReference type="InterPro" id="IPR015421">
    <property type="entry name" value="PyrdxlP-dep_Trfase_major"/>
</dbReference>
<dbReference type="InterPro" id="IPR015422">
    <property type="entry name" value="PyrdxlP-dep_Trfase_small"/>
</dbReference>
<dbReference type="NCBIfam" id="TIGR00713">
    <property type="entry name" value="hemL"/>
    <property type="match status" value="1"/>
</dbReference>
<dbReference type="NCBIfam" id="NF000818">
    <property type="entry name" value="PRK00062.1"/>
    <property type="match status" value="1"/>
</dbReference>
<dbReference type="PANTHER" id="PTHR43713">
    <property type="entry name" value="GLUTAMATE-1-SEMIALDEHYDE 2,1-AMINOMUTASE"/>
    <property type="match status" value="1"/>
</dbReference>
<dbReference type="PANTHER" id="PTHR43713:SF3">
    <property type="entry name" value="GLUTAMATE-1-SEMIALDEHYDE 2,1-AMINOMUTASE 1, CHLOROPLASTIC-RELATED"/>
    <property type="match status" value="1"/>
</dbReference>
<dbReference type="Pfam" id="PF00202">
    <property type="entry name" value="Aminotran_3"/>
    <property type="match status" value="1"/>
</dbReference>
<dbReference type="SUPFAM" id="SSF53383">
    <property type="entry name" value="PLP-dependent transferases"/>
    <property type="match status" value="1"/>
</dbReference>
<dbReference type="PROSITE" id="PS00600">
    <property type="entry name" value="AA_TRANSFER_CLASS_3"/>
    <property type="match status" value="1"/>
</dbReference>
<comment type="catalytic activity">
    <reaction evidence="1">
        <text>(S)-4-amino-5-oxopentanoate = 5-aminolevulinate</text>
        <dbReference type="Rhea" id="RHEA:14265"/>
        <dbReference type="ChEBI" id="CHEBI:57501"/>
        <dbReference type="ChEBI" id="CHEBI:356416"/>
        <dbReference type="EC" id="5.4.3.8"/>
    </reaction>
</comment>
<comment type="cofactor">
    <cofactor evidence="1">
        <name>pyridoxal 5'-phosphate</name>
        <dbReference type="ChEBI" id="CHEBI:597326"/>
    </cofactor>
</comment>
<comment type="pathway">
    <text evidence="1">Porphyrin-containing compound metabolism; protoporphyrin-IX biosynthesis; 5-aminolevulinate from L-glutamyl-tRNA(Glu): step 2/2.</text>
</comment>
<comment type="subunit">
    <text evidence="1">Homodimer.</text>
</comment>
<comment type="subcellular location">
    <subcellularLocation>
        <location evidence="1">Cytoplasm</location>
    </subcellularLocation>
</comment>
<comment type="similarity">
    <text evidence="1">Belongs to the class-III pyridoxal-phosphate-dependent aminotransferase family. HemL subfamily.</text>
</comment>
<sequence length="425" mass="44921">MSRNLELFERGKQVIPGGVNSPVRAFGQVGGTPRFVARAEGAYFWDADGKQYLDYVGSWGPAIVGHAHPEVVKAVQDAAVGGLSFGAPTEGEVVIAEEICKLLPSVEQVRLVSSGTEATMTAIRLARGFTGRDLIVKFEGCYHGHSDSLLVKAGSGLLTFGNPSSGGVPADFTKHTLVLQYNDVEQLSRTFAEIGDKIACVILEPIAGNMNLIQPSREFVQALRQLTEKHGAVLIYDEVMTGFRVAKGCAQGLHGVTPDLTTLGKVVGGGMPLAAFGGRADIMGKIAPLGTVYQAGTLSGNPLSVAAGLATLKLIQQPGFYETLGSRTARLAQGLAEEARKAGVTLSTDSVGGMFGFYFSDKAPKSYAEATGCDIERFKRFFHAMLDEGVYFAPSAYEAGFVSAAHSEQMIESTLAAAGRAFARL</sequence>
<name>GSA_CHRVO</name>
<reference key="1">
    <citation type="journal article" date="2003" name="Proc. Natl. Acad. Sci. U.S.A.">
        <title>The complete genome sequence of Chromobacterium violaceum reveals remarkable and exploitable bacterial adaptability.</title>
        <authorList>
            <person name="Vasconcelos A.T.R."/>
            <person name="de Almeida D.F."/>
            <person name="Hungria M."/>
            <person name="Guimaraes C.T."/>
            <person name="Antonio R.V."/>
            <person name="Almeida F.C."/>
            <person name="de Almeida L.G.P."/>
            <person name="de Almeida R."/>
            <person name="Alves-Gomes J.A."/>
            <person name="Andrade E.M."/>
            <person name="Araripe J."/>
            <person name="de Araujo M.F.F."/>
            <person name="Astolfi-Filho S."/>
            <person name="Azevedo V."/>
            <person name="Baptista A.J."/>
            <person name="Bataus L.A.M."/>
            <person name="Batista J.S."/>
            <person name="Belo A."/>
            <person name="van den Berg C."/>
            <person name="Bogo M."/>
            <person name="Bonatto S."/>
            <person name="Bordignon J."/>
            <person name="Brigido M.M."/>
            <person name="Brito C.A."/>
            <person name="Brocchi M."/>
            <person name="Burity H.A."/>
            <person name="Camargo A.A."/>
            <person name="Cardoso D.D.P."/>
            <person name="Carneiro N.P."/>
            <person name="Carraro D.M."/>
            <person name="Carvalho C.M.B."/>
            <person name="Cascardo J.C.M."/>
            <person name="Cavada B.S."/>
            <person name="Chueire L.M.O."/>
            <person name="Creczynski-Pasa T.B."/>
            <person name="Cunha-Junior N.C."/>
            <person name="Fagundes N."/>
            <person name="Falcao C.L."/>
            <person name="Fantinatti F."/>
            <person name="Farias I.P."/>
            <person name="Felipe M.S.S."/>
            <person name="Ferrari L.P."/>
            <person name="Ferro J.A."/>
            <person name="Ferro M.I.T."/>
            <person name="Franco G.R."/>
            <person name="Freitas N.S.A."/>
            <person name="Furlan L.R."/>
            <person name="Gazzinelli R.T."/>
            <person name="Gomes E.A."/>
            <person name="Goncalves P.R."/>
            <person name="Grangeiro T.B."/>
            <person name="Grattapaglia D."/>
            <person name="Grisard E.C."/>
            <person name="Hanna E.S."/>
            <person name="Jardim S.N."/>
            <person name="Laurino J."/>
            <person name="Leoi L.C.T."/>
            <person name="Lima L.F.A."/>
            <person name="Loureiro M.F."/>
            <person name="Lyra M.C.C.P."/>
            <person name="Madeira H.M.F."/>
            <person name="Manfio G.P."/>
            <person name="Maranhao A.Q."/>
            <person name="Martins W.S."/>
            <person name="di Mauro S.M.Z."/>
            <person name="de Medeiros S.R.B."/>
            <person name="Meissner R.V."/>
            <person name="Moreira M.A.M."/>
            <person name="Nascimento F.F."/>
            <person name="Nicolas M.F."/>
            <person name="Oliveira J.G."/>
            <person name="Oliveira S.C."/>
            <person name="Paixao R.F.C."/>
            <person name="Parente J.A."/>
            <person name="Pedrosa F.O."/>
            <person name="Pena S.D.J."/>
            <person name="Pereira J.O."/>
            <person name="Pereira M."/>
            <person name="Pinto L.S.R.C."/>
            <person name="Pinto L.S."/>
            <person name="Porto J.I.R."/>
            <person name="Potrich D.P."/>
            <person name="Ramalho-Neto C.E."/>
            <person name="Reis A.M.M."/>
            <person name="Rigo L.U."/>
            <person name="Rondinelli E."/>
            <person name="Santos E.B.P."/>
            <person name="Santos F.R."/>
            <person name="Schneider M.P.C."/>
            <person name="Seuanez H.N."/>
            <person name="Silva A.M.R."/>
            <person name="da Silva A.L.C."/>
            <person name="Silva D.W."/>
            <person name="Silva R."/>
            <person name="Simoes I.C."/>
            <person name="Simon D."/>
            <person name="Soares C.M.A."/>
            <person name="Soares R.B.A."/>
            <person name="Souza E.M."/>
            <person name="Souza K.R.L."/>
            <person name="Souza R.C."/>
            <person name="Steffens M.B.R."/>
            <person name="Steindel M."/>
            <person name="Teixeira S.R."/>
            <person name="Urmenyi T."/>
            <person name="Vettore A."/>
            <person name="Wassem R."/>
            <person name="Zaha A."/>
            <person name="Simpson A.J.G."/>
        </authorList>
    </citation>
    <scope>NUCLEOTIDE SEQUENCE [LARGE SCALE GENOMIC DNA]</scope>
    <source>
        <strain>ATCC 12472 / DSM 30191 / JCM 1249 / CCUG 213 / NBRC 12614 / NCIMB 9131 / NCTC 9757 / MK</strain>
    </source>
</reference>
<accession>Q7P1Z5</accession>
<gene>
    <name evidence="1" type="primary">hemL</name>
    <name type="ordered locus">CV_0067</name>
</gene>
<feature type="chain" id="PRO_0000243563" description="Glutamate-1-semialdehyde 2,1-aminomutase">
    <location>
        <begin position="1"/>
        <end position="425"/>
    </location>
</feature>
<feature type="modified residue" description="N6-(pyridoxal phosphate)lysine" evidence="1">
    <location>
        <position position="265"/>
    </location>
</feature>
<keyword id="KW-0963">Cytoplasm</keyword>
<keyword id="KW-0413">Isomerase</keyword>
<keyword id="KW-0627">Porphyrin biosynthesis</keyword>
<keyword id="KW-0663">Pyridoxal phosphate</keyword>
<keyword id="KW-1185">Reference proteome</keyword>
<proteinExistence type="inferred from homology"/>